<evidence type="ECO:0000255" key="1">
    <source>
        <dbReference type="HAMAP-Rule" id="MF_00050"/>
    </source>
</evidence>
<dbReference type="EMBL" id="CP000673">
    <property type="protein sequence ID" value="EDK33460.1"/>
    <property type="molecule type" value="Genomic_DNA"/>
</dbReference>
<dbReference type="RefSeq" id="WP_012101807.1">
    <property type="nucleotide sequence ID" value="NC_009706.1"/>
</dbReference>
<dbReference type="SMR" id="A5N829"/>
<dbReference type="STRING" id="431943.CKL_1418"/>
<dbReference type="KEGG" id="ckl:CKL_1418"/>
<dbReference type="eggNOG" id="COG0264">
    <property type="taxonomic scope" value="Bacteria"/>
</dbReference>
<dbReference type="HOGENOM" id="CLU_047155_0_0_9"/>
<dbReference type="Proteomes" id="UP000002411">
    <property type="component" value="Chromosome"/>
</dbReference>
<dbReference type="GO" id="GO:0005737">
    <property type="term" value="C:cytoplasm"/>
    <property type="evidence" value="ECO:0007669"/>
    <property type="project" value="UniProtKB-SubCell"/>
</dbReference>
<dbReference type="GO" id="GO:0003746">
    <property type="term" value="F:translation elongation factor activity"/>
    <property type="evidence" value="ECO:0007669"/>
    <property type="project" value="UniProtKB-UniRule"/>
</dbReference>
<dbReference type="CDD" id="cd14275">
    <property type="entry name" value="UBA_EF-Ts"/>
    <property type="match status" value="1"/>
</dbReference>
<dbReference type="FunFam" id="1.10.286.20:FF:000001">
    <property type="entry name" value="Elongation factor Ts"/>
    <property type="match status" value="1"/>
</dbReference>
<dbReference type="FunFam" id="1.10.8.10:FF:000001">
    <property type="entry name" value="Elongation factor Ts"/>
    <property type="match status" value="1"/>
</dbReference>
<dbReference type="Gene3D" id="1.10.286.20">
    <property type="match status" value="1"/>
</dbReference>
<dbReference type="Gene3D" id="1.10.8.10">
    <property type="entry name" value="DNA helicase RuvA subunit, C-terminal domain"/>
    <property type="match status" value="1"/>
</dbReference>
<dbReference type="Gene3D" id="3.30.479.20">
    <property type="entry name" value="Elongation factor Ts, dimerisation domain"/>
    <property type="match status" value="2"/>
</dbReference>
<dbReference type="HAMAP" id="MF_00050">
    <property type="entry name" value="EF_Ts"/>
    <property type="match status" value="1"/>
</dbReference>
<dbReference type="InterPro" id="IPR036402">
    <property type="entry name" value="EF-Ts_dimer_sf"/>
</dbReference>
<dbReference type="InterPro" id="IPR001816">
    <property type="entry name" value="Transl_elong_EFTs/EF1B"/>
</dbReference>
<dbReference type="InterPro" id="IPR014039">
    <property type="entry name" value="Transl_elong_EFTs/EF1B_dimer"/>
</dbReference>
<dbReference type="InterPro" id="IPR018101">
    <property type="entry name" value="Transl_elong_Ts_CS"/>
</dbReference>
<dbReference type="InterPro" id="IPR009060">
    <property type="entry name" value="UBA-like_sf"/>
</dbReference>
<dbReference type="NCBIfam" id="TIGR00116">
    <property type="entry name" value="tsf"/>
    <property type="match status" value="1"/>
</dbReference>
<dbReference type="PANTHER" id="PTHR11741">
    <property type="entry name" value="ELONGATION FACTOR TS"/>
    <property type="match status" value="1"/>
</dbReference>
<dbReference type="PANTHER" id="PTHR11741:SF0">
    <property type="entry name" value="ELONGATION FACTOR TS, MITOCHONDRIAL"/>
    <property type="match status" value="1"/>
</dbReference>
<dbReference type="Pfam" id="PF00889">
    <property type="entry name" value="EF_TS"/>
    <property type="match status" value="1"/>
</dbReference>
<dbReference type="SUPFAM" id="SSF54713">
    <property type="entry name" value="Elongation factor Ts (EF-Ts), dimerisation domain"/>
    <property type="match status" value="2"/>
</dbReference>
<dbReference type="SUPFAM" id="SSF46934">
    <property type="entry name" value="UBA-like"/>
    <property type="match status" value="1"/>
</dbReference>
<dbReference type="PROSITE" id="PS01126">
    <property type="entry name" value="EF_TS_1"/>
    <property type="match status" value="1"/>
</dbReference>
<reference key="1">
    <citation type="journal article" date="2008" name="Proc. Natl. Acad. Sci. U.S.A.">
        <title>The genome of Clostridium kluyveri, a strict anaerobe with unique metabolic features.</title>
        <authorList>
            <person name="Seedorf H."/>
            <person name="Fricke W.F."/>
            <person name="Veith B."/>
            <person name="Brueggemann H."/>
            <person name="Liesegang H."/>
            <person name="Strittmatter A."/>
            <person name="Miethke M."/>
            <person name="Buckel W."/>
            <person name="Hinderberger J."/>
            <person name="Li F."/>
            <person name="Hagemeier C."/>
            <person name="Thauer R.K."/>
            <person name="Gottschalk G."/>
        </authorList>
    </citation>
    <scope>NUCLEOTIDE SEQUENCE [LARGE SCALE GENOMIC DNA]</scope>
    <source>
        <strain>ATCC 8527 / DSM 555 / NBRC 12016 / NCIMB 10680 / K1</strain>
    </source>
</reference>
<protein>
    <recommendedName>
        <fullName evidence="1">Elongation factor Ts</fullName>
        <shortName evidence="1">EF-Ts</shortName>
    </recommendedName>
</protein>
<feature type="chain" id="PRO_1000074858" description="Elongation factor Ts">
    <location>
        <begin position="1"/>
        <end position="306"/>
    </location>
</feature>
<feature type="region of interest" description="Involved in Mg(2+) ion dislocation from EF-Tu" evidence="1">
    <location>
        <begin position="80"/>
        <end position="83"/>
    </location>
</feature>
<organism>
    <name type="scientific">Clostridium kluyveri (strain ATCC 8527 / DSM 555 / NBRC 12016 / NCIMB 10680 / K1)</name>
    <dbReference type="NCBI Taxonomy" id="431943"/>
    <lineage>
        <taxon>Bacteria</taxon>
        <taxon>Bacillati</taxon>
        <taxon>Bacillota</taxon>
        <taxon>Clostridia</taxon>
        <taxon>Eubacteriales</taxon>
        <taxon>Clostridiaceae</taxon>
        <taxon>Clostridium</taxon>
    </lineage>
</organism>
<sequence>MITAQMVKELRERTGAGMMDCKKALNEAGGDSEKAIEILREKGLAAAAKKSGRIASEGLVKTYISEDGKVASIVEVNCETDFVAVNADFVNFVDNLAKQISLSESTTVEELSEEKYISDDSKTVSETLVNLISKLGENMAIRRFERLAVSKGLIESYIHGGGRIGVLVKLECEKESEILKEVAKDVAMQVAATNPLFLSKDTVDSATLDKEKEIFKVQALNEGKPEKIAEKIVIGRVQKYYKENCLIEQLWVKDSDLTIDKYLKSKSKEVGAPIKISNFIRFEKGEGIEKKEEDFAEEVRKQIEGK</sequence>
<keyword id="KW-0963">Cytoplasm</keyword>
<keyword id="KW-0251">Elongation factor</keyword>
<keyword id="KW-0648">Protein biosynthesis</keyword>
<keyword id="KW-1185">Reference proteome</keyword>
<proteinExistence type="inferred from homology"/>
<comment type="function">
    <text evidence="1">Associates with the EF-Tu.GDP complex and induces the exchange of GDP to GTP. It remains bound to the aminoacyl-tRNA.EF-Tu.GTP complex up to the GTP hydrolysis stage on the ribosome.</text>
</comment>
<comment type="subcellular location">
    <subcellularLocation>
        <location evidence="1">Cytoplasm</location>
    </subcellularLocation>
</comment>
<comment type="similarity">
    <text evidence="1">Belongs to the EF-Ts family.</text>
</comment>
<accession>A5N829</accession>
<name>EFTS_CLOK5</name>
<gene>
    <name evidence="1" type="primary">tsf</name>
    <name type="ordered locus">CKL_1418</name>
</gene>